<reference key="1">
    <citation type="submission" date="2006-10" db="EMBL/GenBank/DDBJ databases">
        <authorList>
            <consortium name="Sanger Xenopus tropicalis EST/cDNA project"/>
        </authorList>
    </citation>
    <scope>NUCLEOTIDE SEQUENCE [LARGE SCALE MRNA]</scope>
    <source>
        <tissue>Neurula</tissue>
    </source>
</reference>
<reference key="2">
    <citation type="submission" date="2004-09" db="EMBL/GenBank/DDBJ databases">
        <authorList>
            <consortium name="NIH - Xenopus Gene Collection (XGC) project"/>
        </authorList>
    </citation>
    <scope>NUCLEOTIDE SEQUENCE [LARGE SCALE MRNA]</scope>
    <source>
        <tissue>Tail bud</tissue>
    </source>
</reference>
<dbReference type="EC" id="1.5.1.6" evidence="2"/>
<dbReference type="EMBL" id="CR926185">
    <property type="protein sequence ID" value="CAJ82649.1"/>
    <property type="molecule type" value="mRNA"/>
</dbReference>
<dbReference type="EMBL" id="CR926221">
    <property type="protein sequence ID" value="CAJ83333.1"/>
    <property type="molecule type" value="mRNA"/>
</dbReference>
<dbReference type="EMBL" id="BC082822">
    <property type="protein sequence ID" value="AAH82822.1"/>
    <property type="molecule type" value="mRNA"/>
</dbReference>
<dbReference type="RefSeq" id="NP_001011027.1">
    <property type="nucleotide sequence ID" value="NM_001011027.1"/>
</dbReference>
<dbReference type="SMR" id="Q63ZT8"/>
<dbReference type="FunCoup" id="Q63ZT8">
    <property type="interactions" value="481"/>
</dbReference>
<dbReference type="STRING" id="8364.ENSXETP00000028910"/>
<dbReference type="PaxDb" id="8364-ENSXETP00000062653"/>
<dbReference type="DNASU" id="496436"/>
<dbReference type="GeneID" id="496436"/>
<dbReference type="KEGG" id="xtr:496436"/>
<dbReference type="AGR" id="Xenbase:XB-GENE-1016237"/>
<dbReference type="CTD" id="10840"/>
<dbReference type="Xenbase" id="XB-GENE-1016237">
    <property type="gene designation" value="aldh1l1"/>
</dbReference>
<dbReference type="eggNOG" id="KOG2452">
    <property type="taxonomic scope" value="Eukaryota"/>
</dbReference>
<dbReference type="InParanoid" id="Q63ZT8"/>
<dbReference type="OMA" id="FENGVWG"/>
<dbReference type="OrthoDB" id="310895at2759"/>
<dbReference type="Reactome" id="R-XTR-196757">
    <property type="pathway name" value="Metabolism of folate and pterines"/>
</dbReference>
<dbReference type="Proteomes" id="UP000008143">
    <property type="component" value="Chromosome 4"/>
</dbReference>
<dbReference type="Bgee" id="ENSXETG00000011551">
    <property type="expression patterns" value="Expressed in neurula embryo and 8 other cell types or tissues"/>
</dbReference>
<dbReference type="GO" id="GO:0005829">
    <property type="term" value="C:cytosol"/>
    <property type="evidence" value="ECO:0000250"/>
    <property type="project" value="UniProtKB"/>
</dbReference>
<dbReference type="GO" id="GO:0016155">
    <property type="term" value="F:formyltetrahydrofolate dehydrogenase activity"/>
    <property type="evidence" value="ECO:0000250"/>
    <property type="project" value="UniProtKB"/>
</dbReference>
<dbReference type="GO" id="GO:0016620">
    <property type="term" value="F:oxidoreductase activity, acting on the aldehyde or oxo group of donors, NAD or NADP as acceptor"/>
    <property type="evidence" value="ECO:0007669"/>
    <property type="project" value="InterPro"/>
</dbReference>
<dbReference type="GO" id="GO:0009258">
    <property type="term" value="P:10-formyltetrahydrofolate catabolic process"/>
    <property type="evidence" value="ECO:0000250"/>
    <property type="project" value="UniProtKB"/>
</dbReference>
<dbReference type="GO" id="GO:0009058">
    <property type="term" value="P:biosynthetic process"/>
    <property type="evidence" value="ECO:0007669"/>
    <property type="project" value="InterPro"/>
</dbReference>
<dbReference type="GO" id="GO:0006740">
    <property type="term" value="P:NADPH regeneration"/>
    <property type="evidence" value="ECO:0000250"/>
    <property type="project" value="UniProtKB"/>
</dbReference>
<dbReference type="GO" id="GO:0006730">
    <property type="term" value="P:one-carbon metabolic process"/>
    <property type="evidence" value="ECO:0007669"/>
    <property type="project" value="UniProtKB-KW"/>
</dbReference>
<dbReference type="CDD" id="cd07140">
    <property type="entry name" value="ALDH_F1L_FTFDH"/>
    <property type="match status" value="1"/>
</dbReference>
<dbReference type="CDD" id="cd08703">
    <property type="entry name" value="FDH_Hydrolase_C"/>
    <property type="match status" value="1"/>
</dbReference>
<dbReference type="CDD" id="cd08647">
    <property type="entry name" value="FMT_core_FDH_N"/>
    <property type="match status" value="1"/>
</dbReference>
<dbReference type="FunFam" id="1.10.1200.10:FF:000002">
    <property type="entry name" value="10-formyltetrahydrofolate dehydrogenase"/>
    <property type="match status" value="1"/>
</dbReference>
<dbReference type="FunFam" id="3.10.25.10:FF:000002">
    <property type="entry name" value="10-formyltetrahydrofolate dehydrogenase"/>
    <property type="match status" value="1"/>
</dbReference>
<dbReference type="FunFam" id="3.40.50.170:FF:000002">
    <property type="entry name" value="10-formyltetrahydrofolate dehydrogenase"/>
    <property type="match status" value="1"/>
</dbReference>
<dbReference type="FunFam" id="3.40.605.10:FF:000026">
    <property type="entry name" value="Aldehyde dehydrogenase, putative"/>
    <property type="match status" value="1"/>
</dbReference>
<dbReference type="FunFam" id="3.40.309.10:FF:000008">
    <property type="entry name" value="Cytosolic 10-formyltetrahydrofolate dehydrogenase"/>
    <property type="match status" value="1"/>
</dbReference>
<dbReference type="FunFam" id="3.40.605.10:FF:000009">
    <property type="entry name" value="Cytosolic 10-formyltetrahydrofolate dehydrogenase"/>
    <property type="match status" value="1"/>
</dbReference>
<dbReference type="Gene3D" id="1.10.1200.10">
    <property type="entry name" value="ACP-like"/>
    <property type="match status" value="1"/>
</dbReference>
<dbReference type="Gene3D" id="3.40.605.10">
    <property type="entry name" value="Aldehyde Dehydrogenase, Chain A, domain 1"/>
    <property type="match status" value="1"/>
</dbReference>
<dbReference type="Gene3D" id="3.40.309.10">
    <property type="entry name" value="Aldehyde Dehydrogenase, Chain A, domain 2"/>
    <property type="match status" value="1"/>
</dbReference>
<dbReference type="Gene3D" id="3.10.25.10">
    <property type="entry name" value="Formyl transferase, C-terminal domain"/>
    <property type="match status" value="1"/>
</dbReference>
<dbReference type="Gene3D" id="3.40.50.170">
    <property type="entry name" value="Formyl transferase, N-terminal domain"/>
    <property type="match status" value="1"/>
</dbReference>
<dbReference type="InterPro" id="IPR011407">
    <property type="entry name" value="10_FTHF_DH"/>
</dbReference>
<dbReference type="InterPro" id="IPR036736">
    <property type="entry name" value="ACP-like_sf"/>
</dbReference>
<dbReference type="InterPro" id="IPR016161">
    <property type="entry name" value="Ald_DH/histidinol_DH"/>
</dbReference>
<dbReference type="InterPro" id="IPR016163">
    <property type="entry name" value="Ald_DH_C"/>
</dbReference>
<dbReference type="InterPro" id="IPR016160">
    <property type="entry name" value="Ald_DH_CS_CYS"/>
</dbReference>
<dbReference type="InterPro" id="IPR029510">
    <property type="entry name" value="Ald_DH_CS_GLU"/>
</dbReference>
<dbReference type="InterPro" id="IPR016162">
    <property type="entry name" value="Ald_DH_N"/>
</dbReference>
<dbReference type="InterPro" id="IPR015590">
    <property type="entry name" value="Aldehyde_DH_dom"/>
</dbReference>
<dbReference type="InterPro" id="IPR005793">
    <property type="entry name" value="Formyl_trans_C"/>
</dbReference>
<dbReference type="InterPro" id="IPR037022">
    <property type="entry name" value="Formyl_trans_C_sf"/>
</dbReference>
<dbReference type="InterPro" id="IPR002376">
    <property type="entry name" value="Formyl_transf_N"/>
</dbReference>
<dbReference type="InterPro" id="IPR036477">
    <property type="entry name" value="Formyl_transf_N_sf"/>
</dbReference>
<dbReference type="InterPro" id="IPR011034">
    <property type="entry name" value="Formyl_transferase-like_C_sf"/>
</dbReference>
<dbReference type="InterPro" id="IPR001555">
    <property type="entry name" value="GART_AS"/>
</dbReference>
<dbReference type="InterPro" id="IPR009081">
    <property type="entry name" value="PP-bd_ACP"/>
</dbReference>
<dbReference type="PANTHER" id="PTHR11699">
    <property type="entry name" value="ALDEHYDE DEHYDROGENASE-RELATED"/>
    <property type="match status" value="1"/>
</dbReference>
<dbReference type="Pfam" id="PF00171">
    <property type="entry name" value="Aldedh"/>
    <property type="match status" value="1"/>
</dbReference>
<dbReference type="Pfam" id="PF02911">
    <property type="entry name" value="Formyl_trans_C"/>
    <property type="match status" value="1"/>
</dbReference>
<dbReference type="Pfam" id="PF00551">
    <property type="entry name" value="Formyl_trans_N"/>
    <property type="match status" value="1"/>
</dbReference>
<dbReference type="PIRSF" id="PIRSF036489">
    <property type="entry name" value="10-FTHFDH"/>
    <property type="match status" value="1"/>
</dbReference>
<dbReference type="SUPFAM" id="SSF53720">
    <property type="entry name" value="ALDH-like"/>
    <property type="match status" value="1"/>
</dbReference>
<dbReference type="SUPFAM" id="SSF50486">
    <property type="entry name" value="FMT C-terminal domain-like"/>
    <property type="match status" value="1"/>
</dbReference>
<dbReference type="SUPFAM" id="SSF53328">
    <property type="entry name" value="Formyltransferase"/>
    <property type="match status" value="1"/>
</dbReference>
<dbReference type="PROSITE" id="PS00070">
    <property type="entry name" value="ALDEHYDE_DEHYDR_CYS"/>
    <property type="match status" value="1"/>
</dbReference>
<dbReference type="PROSITE" id="PS00687">
    <property type="entry name" value="ALDEHYDE_DEHYDR_GLU"/>
    <property type="match status" value="1"/>
</dbReference>
<dbReference type="PROSITE" id="PS50075">
    <property type="entry name" value="CARRIER"/>
    <property type="match status" value="1"/>
</dbReference>
<dbReference type="PROSITE" id="PS00373">
    <property type="entry name" value="GART"/>
    <property type="match status" value="1"/>
</dbReference>
<comment type="function">
    <text evidence="2 3">Cytosolic 10-formyltetrahydrofolate dehydrogenase that catalyzes the NADP(+)-dependent conversion of 10-formyltetrahydrofolate to tetrahydrofolate and carbon dioxide. May also have an NADP(+)-dependent aldehyde dehydrogenase activity towards formaldehyde, acetaldehyde, propionaldehyde, and benzaldehyde (By similarity). Regulates reduced folate pools as well as glycine metabolism (By similarity).</text>
</comment>
<comment type="catalytic activity">
    <reaction evidence="2">
        <text>(6R)-10-formyltetrahydrofolate + NADP(+) + H2O = (6S)-5,6,7,8-tetrahydrofolate + CO2 + NADPH + H(+)</text>
        <dbReference type="Rhea" id="RHEA:10180"/>
        <dbReference type="ChEBI" id="CHEBI:15377"/>
        <dbReference type="ChEBI" id="CHEBI:15378"/>
        <dbReference type="ChEBI" id="CHEBI:16526"/>
        <dbReference type="ChEBI" id="CHEBI:57453"/>
        <dbReference type="ChEBI" id="CHEBI:57783"/>
        <dbReference type="ChEBI" id="CHEBI:58349"/>
        <dbReference type="ChEBI" id="CHEBI:195366"/>
        <dbReference type="EC" id="1.5.1.6"/>
    </reaction>
    <physiologicalReaction direction="left-to-right" evidence="2">
        <dbReference type="Rhea" id="RHEA:10181"/>
    </physiologicalReaction>
</comment>
<comment type="subunit">
    <text evidence="2">Homotetramer.</text>
</comment>
<comment type="subcellular location">
    <subcellularLocation>
        <location evidence="2">Cytoplasm</location>
        <location evidence="2">Cytosol</location>
    </subcellularLocation>
</comment>
<comment type="domain">
    <text evidence="2">The N-terminal hydrolase domain has an NADP-independent formyltetrahydrofolate hydrolase activity, releasing formate and tetrahydrofolate.</text>
</comment>
<comment type="domain">
    <text evidence="2">The C-terminal aldehyde dehydrogenase domain has an NADP-dependent dehydrogenase activity. It catalyzes the oxidation of formate, released by the hydrolysis of formyltetrahydrofolate, into CO2.</text>
</comment>
<comment type="domain">
    <text evidence="2">The carrier domain is phosphopantetheinylated and uses the 4'-phosphopantetheine/4'-PP swinging arm to transfer the formyl group released by the N-terminal formyltetrahydrofolate hydrolase activity to the C-terminal aldehyde dehydrogenase domain that catalyzes its NADP-dependent oxidation into CO2. The overall NADP-dependent physiological reaction requires the 3 domains (N-terminal hydrolase, C-terminal aldehyde dehydrogenase and carrier domains) to convert formyltetrahydrofolate into tetrahydrofolate and CO2.</text>
</comment>
<comment type="PTM">
    <text evidence="2">Phosphopantetheinylation at Ser-354 by AASDHPPT is required for the formyltetrahydrofolate dehydrogenase activity.</text>
</comment>
<comment type="similarity">
    <text evidence="5">In the N-terminal section; belongs to the GART family.</text>
</comment>
<comment type="similarity">
    <text evidence="5">In the C-terminal section; belongs to the aldehyde dehydrogenase family. ALDH1L subfamily.</text>
</comment>
<proteinExistence type="evidence at transcript level"/>
<protein>
    <recommendedName>
        <fullName evidence="5">Cytosolic 10-formyltetrahydrofolate dehydrogenase</fullName>
        <shortName>10-FTHFDH</shortName>
        <shortName>FDH</shortName>
        <ecNumber evidence="2">1.5.1.6</ecNumber>
    </recommendedName>
    <alternativeName>
        <fullName>Aldehyde dehydrogenase family 1 member L1</fullName>
    </alternativeName>
</protein>
<evidence type="ECO:0000250" key="1">
    <source>
        <dbReference type="UniProtKB" id="O75891"/>
    </source>
</evidence>
<evidence type="ECO:0000250" key="2">
    <source>
        <dbReference type="UniProtKB" id="P28037"/>
    </source>
</evidence>
<evidence type="ECO:0000250" key="3">
    <source>
        <dbReference type="UniProtKB" id="Q8R0Y6"/>
    </source>
</evidence>
<evidence type="ECO:0000255" key="4">
    <source>
        <dbReference type="PROSITE-ProRule" id="PRU00258"/>
    </source>
</evidence>
<evidence type="ECO:0000305" key="5"/>
<sequence>MKIAVIGQSLFGREVYRELLKEGHQVVGVFTIPDKNGKADPLGADAEKDGIPVFKFPRWRVKGQAIPEVVEKYKALEAELNVLPFCSQFIPMEVIDCPKHGSIIYHPSILPRHRGASAINWTLMQGDKIGGFTIFWADDGLDTGDILLQRECEVLPDDTVNTIYNRFLFPEGVKGMVEAVRLIAEGNAPRIKQATEGATYDPMQKKENAKINWDQPAEAIHNFIRGNDKVPGAWTVVGDQQLTFFGSSFISNGPAPDGQPLEIPGAFRPAVVTKTGLVLFGNDGQKLSVKNIQFEDGKMIPASQYYKTADSAALQLSDEEKKFSEEIRAAWKRILTNVSEIEDSTDFFKAGAASMDVVRLVEEVKLKCNGLQLQNEDVYMATKFEEFIQMVVRRLRGEDGEEELVVDYVEKEINNMTVKIPHQLFINGQFIDAEGGKTYDTVNPTDGTAICKVSLAQVSDIDRAVAAAKEAFENGEWGKMNPRDRGRILYRLADIMEEHQEELATIESIDSGAVYTLALKTHVGMSIQTFRYFAGWCDKIQGSTIPINQARPNRNLTFTRREPIGVCGIVIPWNYPLMMLAWKTAACLAAGNTVVLKPAQVTPLTALKFAELSVKAGIPKGVINILPGAGSLIGQRLSDHPDVRKIGFTGSTPIGKHIMKSCAVGNVKKVSLELGGKSPLIIFQDCDLDKAVRMGMSSVFFNKGENCIAAGRLFLEESIHDEFVKRVVGEVKKMKIGDPLDRSTDHGPQNHKAHLDKLIEYCQTGVKEGAKLVYGGKQVERPGFFFEPTIFTDVTDEMFIAKEESFGPIMIISKFKDGDVDEVLKRANNTEFGLASGVFTKDISKALYVSEKLQAGTVFVNTYNKTDVAAPFGGFKQSGFGKDLGEEALNEYLKTKAVTIEY</sequence>
<name>AL1L1_XENTR</name>
<organism>
    <name type="scientific">Xenopus tropicalis</name>
    <name type="common">Western clawed frog</name>
    <name type="synonym">Silurana tropicalis</name>
    <dbReference type="NCBI Taxonomy" id="8364"/>
    <lineage>
        <taxon>Eukaryota</taxon>
        <taxon>Metazoa</taxon>
        <taxon>Chordata</taxon>
        <taxon>Craniata</taxon>
        <taxon>Vertebrata</taxon>
        <taxon>Euteleostomi</taxon>
        <taxon>Amphibia</taxon>
        <taxon>Batrachia</taxon>
        <taxon>Anura</taxon>
        <taxon>Pipoidea</taxon>
        <taxon>Pipidae</taxon>
        <taxon>Xenopodinae</taxon>
        <taxon>Xenopus</taxon>
        <taxon>Silurana</taxon>
    </lineage>
</organism>
<feature type="chain" id="PRO_0000316000" description="Cytosolic 10-formyltetrahydrofolate dehydrogenase">
    <location>
        <begin position="1"/>
        <end position="902"/>
    </location>
</feature>
<feature type="domain" description="Carrier" evidence="4">
    <location>
        <begin position="318"/>
        <end position="395"/>
    </location>
</feature>
<feature type="region of interest" description="Hydrolase domain" evidence="2">
    <location>
        <begin position="1"/>
        <end position="310"/>
    </location>
</feature>
<feature type="region of interest" description="Aldehyde dehydrogenase domain" evidence="2">
    <location>
        <begin position="417"/>
        <end position="902"/>
    </location>
</feature>
<feature type="active site" description="Proton donor" evidence="2">
    <location>
        <position position="106"/>
    </location>
</feature>
<feature type="active site" description="Proton acceptor" evidence="2">
    <location>
        <position position="673"/>
    </location>
</feature>
<feature type="active site" description="Proton donor" evidence="2">
    <location>
        <position position="707"/>
    </location>
</feature>
<feature type="binding site" evidence="1">
    <location>
        <begin position="88"/>
        <end position="90"/>
    </location>
    <ligand>
        <name>(6R)-10-formyltetrahydrofolate</name>
        <dbReference type="ChEBI" id="CHEBI:195366"/>
    </ligand>
</feature>
<feature type="binding site" evidence="1">
    <location>
        <position position="142"/>
    </location>
    <ligand>
        <name>(6R)-10-formyltetrahydrofolate</name>
        <dbReference type="ChEBI" id="CHEBI:195366"/>
    </ligand>
</feature>
<feature type="binding site" evidence="2">
    <location>
        <begin position="571"/>
        <end position="573"/>
    </location>
    <ligand>
        <name>NADP(+)</name>
        <dbReference type="ChEBI" id="CHEBI:58349"/>
    </ligand>
</feature>
<feature type="binding site" evidence="2">
    <location>
        <begin position="597"/>
        <end position="600"/>
    </location>
    <ligand>
        <name>NADP(+)</name>
        <dbReference type="ChEBI" id="CHEBI:58349"/>
    </ligand>
</feature>
<feature type="binding site" evidence="2">
    <location>
        <begin position="630"/>
        <end position="635"/>
    </location>
    <ligand>
        <name>NADP(+)</name>
        <dbReference type="ChEBI" id="CHEBI:58349"/>
    </ligand>
</feature>
<feature type="binding site" evidence="2">
    <location>
        <begin position="650"/>
        <end position="651"/>
    </location>
    <ligand>
        <name>NADP(+)</name>
        <dbReference type="ChEBI" id="CHEBI:58349"/>
    </ligand>
</feature>
<feature type="binding site" evidence="2">
    <location>
        <begin position="673"/>
        <end position="674"/>
    </location>
    <ligand>
        <name>NADP(+)</name>
        <dbReference type="ChEBI" id="CHEBI:58349"/>
    </ligand>
</feature>
<feature type="binding site" evidence="2">
    <location>
        <position position="757"/>
    </location>
    <ligand>
        <name>NADP(+)</name>
        <dbReference type="ChEBI" id="CHEBI:58349"/>
    </ligand>
</feature>
<feature type="binding site" evidence="2">
    <location>
        <begin position="804"/>
        <end position="806"/>
    </location>
    <ligand>
        <name>NADP(+)</name>
        <dbReference type="ChEBI" id="CHEBI:58349"/>
    </ligand>
</feature>
<feature type="site" description="Essential for catalytic activity" evidence="2">
    <location>
        <position position="142"/>
    </location>
</feature>
<feature type="modified residue" description="O-(pantetheine 4'-phosphoryl)serine" evidence="2 4">
    <location>
        <position position="354"/>
    </location>
</feature>
<gene>
    <name type="primary">aldh1l1</name>
    <name type="ORF">TNeu011l01.1</name>
</gene>
<keyword id="KW-0963">Cytoplasm</keyword>
<keyword id="KW-0521">NADP</keyword>
<keyword id="KW-0554">One-carbon metabolism</keyword>
<keyword id="KW-0560">Oxidoreductase</keyword>
<keyword id="KW-0596">Phosphopantetheine</keyword>
<keyword id="KW-0597">Phosphoprotein</keyword>
<keyword id="KW-1185">Reference proteome</keyword>
<accession>Q63ZT8</accession>
<accession>Q28CS4</accession>